<protein>
    <recommendedName>
        <fullName>Cell wall protein ECM33</fullName>
    </recommendedName>
    <alternativeName>
        <fullName>Extracellular mutant protein 33</fullName>
    </alternativeName>
</protein>
<evidence type="ECO:0000255" key="1"/>
<evidence type="ECO:0000256" key="2">
    <source>
        <dbReference type="SAM" id="MobiDB-lite"/>
    </source>
</evidence>
<evidence type="ECO:0000269" key="3">
    <source>
    </source>
</evidence>
<evidence type="ECO:0000269" key="4">
    <source>
    </source>
</evidence>
<evidence type="ECO:0000269" key="5">
    <source>
    </source>
</evidence>
<evidence type="ECO:0000269" key="6">
    <source>
    </source>
</evidence>
<evidence type="ECO:0000269" key="7">
    <source>
    </source>
</evidence>
<evidence type="ECO:0000269" key="8">
    <source>
    </source>
</evidence>
<evidence type="ECO:0000269" key="9">
    <source>
    </source>
</evidence>
<evidence type="ECO:0000305" key="10"/>
<evidence type="ECO:0007744" key="11">
    <source>
    </source>
</evidence>
<dbReference type="EMBL" id="X76294">
    <property type="protein sequence ID" value="CAA53935.1"/>
    <property type="status" value="ALT_SEQ"/>
    <property type="molecule type" value="Genomic_DNA"/>
</dbReference>
<dbReference type="EMBL" id="Z35947">
    <property type="protein sequence ID" value="CAA85022.1"/>
    <property type="status" value="ALT_FRAME"/>
    <property type="molecule type" value="Genomic_DNA"/>
</dbReference>
<dbReference type="EMBL" id="Z35948">
    <property type="protein sequence ID" value="CAA85023.1"/>
    <property type="status" value="ALT_FRAME"/>
    <property type="molecule type" value="Genomic_DNA"/>
</dbReference>
<dbReference type="EMBL" id="BK006936">
    <property type="protein sequence ID" value="DAA07197.2"/>
    <property type="molecule type" value="Genomic_DNA"/>
</dbReference>
<dbReference type="PIR" id="S70297">
    <property type="entry name" value="S70297"/>
</dbReference>
<dbReference type="RefSeq" id="NP_009634.2">
    <property type="nucleotide sequence ID" value="NM_001178426.2"/>
</dbReference>
<dbReference type="SMR" id="P38248"/>
<dbReference type="BioGRID" id="32780">
    <property type="interactions" value="396"/>
</dbReference>
<dbReference type="DIP" id="DIP-6584N"/>
<dbReference type="FunCoup" id="P38248">
    <property type="interactions" value="133"/>
</dbReference>
<dbReference type="IntAct" id="P38248">
    <property type="interactions" value="34"/>
</dbReference>
<dbReference type="MINT" id="P38248"/>
<dbReference type="STRING" id="4932.YBR078W"/>
<dbReference type="GlyCosmos" id="P38248">
    <property type="glycosylation" value="13 sites, No reported glycans"/>
</dbReference>
<dbReference type="GlyGen" id="P38248">
    <property type="glycosylation" value="13 sites"/>
</dbReference>
<dbReference type="iPTMnet" id="P38248"/>
<dbReference type="PaxDb" id="4932-YBR078W"/>
<dbReference type="PeptideAtlas" id="P38248"/>
<dbReference type="EnsemblFungi" id="YBR078W_mRNA">
    <property type="protein sequence ID" value="YBR078W"/>
    <property type="gene ID" value="YBR078W"/>
</dbReference>
<dbReference type="GeneID" id="852370"/>
<dbReference type="KEGG" id="sce:YBR078W"/>
<dbReference type="AGR" id="SGD:S000000282"/>
<dbReference type="SGD" id="S000000282">
    <property type="gene designation" value="ECM33"/>
</dbReference>
<dbReference type="VEuPathDB" id="FungiDB:YBR078W"/>
<dbReference type="eggNOG" id="ENOG502QUZC">
    <property type="taxonomic scope" value="Eukaryota"/>
</dbReference>
<dbReference type="GeneTree" id="ENSGT00940000176339"/>
<dbReference type="HOGENOM" id="CLU_035846_0_0_1"/>
<dbReference type="InParanoid" id="P38248"/>
<dbReference type="OMA" id="DKFQCED"/>
<dbReference type="OrthoDB" id="536881at2759"/>
<dbReference type="BioCyc" id="YEAST:G3O-29046-MONOMER"/>
<dbReference type="BioGRID-ORCS" id="852370">
    <property type="hits" value="4 hits in 10 CRISPR screens"/>
</dbReference>
<dbReference type="PRO" id="PR:P38248"/>
<dbReference type="Proteomes" id="UP000002311">
    <property type="component" value="Chromosome II"/>
</dbReference>
<dbReference type="RNAct" id="P38248">
    <property type="molecule type" value="protein"/>
</dbReference>
<dbReference type="GO" id="GO:0005783">
    <property type="term" value="C:endoplasmic reticulum"/>
    <property type="evidence" value="ECO:0007005"/>
    <property type="project" value="SGD"/>
</dbReference>
<dbReference type="GO" id="GO:0005576">
    <property type="term" value="C:extracellular region"/>
    <property type="evidence" value="ECO:0007669"/>
    <property type="project" value="UniProtKB-KW"/>
</dbReference>
<dbReference type="GO" id="GO:0009277">
    <property type="term" value="C:fungal-type cell wall"/>
    <property type="evidence" value="ECO:0000314"/>
    <property type="project" value="SGD"/>
</dbReference>
<dbReference type="GO" id="GO:0005739">
    <property type="term" value="C:mitochondrion"/>
    <property type="evidence" value="ECO:0007005"/>
    <property type="project" value="SGD"/>
</dbReference>
<dbReference type="GO" id="GO:0005886">
    <property type="term" value="C:plasma membrane"/>
    <property type="evidence" value="ECO:0000314"/>
    <property type="project" value="SGD"/>
</dbReference>
<dbReference type="GO" id="GO:0098552">
    <property type="term" value="C:side of membrane"/>
    <property type="evidence" value="ECO:0007669"/>
    <property type="project" value="UniProtKB-KW"/>
</dbReference>
<dbReference type="GO" id="GO:0031505">
    <property type="term" value="P:fungal-type cell wall organization"/>
    <property type="evidence" value="ECO:0000315"/>
    <property type="project" value="SGD"/>
</dbReference>
<dbReference type="FunFam" id="3.80.20.20:FF:000016">
    <property type="entry name" value="Cell wall protein ECM33"/>
    <property type="match status" value="1"/>
</dbReference>
<dbReference type="Gene3D" id="3.80.20.20">
    <property type="entry name" value="Receptor L-domain"/>
    <property type="match status" value="1"/>
</dbReference>
<dbReference type="InterPro" id="IPR051648">
    <property type="entry name" value="CWI-Assembly_Regulator"/>
</dbReference>
<dbReference type="InterPro" id="IPR036941">
    <property type="entry name" value="Rcpt_L-dom_sf"/>
</dbReference>
<dbReference type="PANTHER" id="PTHR31018:SF3">
    <property type="entry name" value="RECEPTOR PROTEIN-TYROSINE KINASE"/>
    <property type="match status" value="1"/>
</dbReference>
<dbReference type="PANTHER" id="PTHR31018">
    <property type="entry name" value="SPORULATION-SPECIFIC PROTEIN-RELATED"/>
    <property type="match status" value="1"/>
</dbReference>
<dbReference type="SUPFAM" id="SSF52058">
    <property type="entry name" value="L domain-like"/>
    <property type="match status" value="1"/>
</dbReference>
<comment type="function">
    <text evidence="4 5 6">Required for proper cell wall integrity and for the correct assembly of the mannoprotein outer layer of the cell wall. Important for apical bud growth.</text>
</comment>
<comment type="subcellular location">
    <subcellularLocation>
        <location evidence="3 5 9">Cell membrane</location>
        <topology evidence="3">Lipid-anchor</topology>
        <topology evidence="3">GPI-anchor</topology>
    </subcellularLocation>
    <subcellularLocation>
        <location evidence="5 7">Secreted</location>
        <location evidence="5 7">Cell wall</location>
    </subcellularLocation>
    <text evidence="5 7">Identified as GPI-anchored plasma membrane protein (GPI-PMP) as well as covalently-linked GPI-modified cell wall protein (GPI-CWP) in the outer cell wall layer.</text>
</comment>
<comment type="PTM">
    <text evidence="10">The GPI-anchor is attached to the protein in the endoplasmic reticulum and serves to target the protein to the cell surface. There, the glucosamine-inositol phospholipid moiety is cleaved off and the GPI-modified mannoprotein is covalently attached via its lipidless GPI glycan remnant to the 1,6-beta-glucan of the outer cell wall layer.</text>
</comment>
<comment type="PTM">
    <text evidence="9">Extensively N-glycosylated.</text>
</comment>
<comment type="miscellaneous">
    <text evidence="8">Present with 6500 wall-bound molecules/cell in log phase YPD medium.</text>
</comment>
<comment type="similarity">
    <text evidence="10">Belongs to the SPS2 family.</text>
</comment>
<comment type="sequence caution" evidence="10">
    <conflict type="erroneous gene model prediction">
        <sequence resource="EMBL-CDS" id="CAA53935"/>
    </conflict>
</comment>
<comment type="sequence caution" evidence="10">
    <conflict type="frameshift">
        <sequence resource="EMBL-CDS" id="CAA53935"/>
    </conflict>
</comment>
<comment type="sequence caution" evidence="10">
    <conflict type="frameshift">
        <sequence resource="EMBL-CDS" id="CAA85022"/>
    </conflict>
</comment>
<comment type="sequence caution" evidence="10">
    <conflict type="frameshift">
        <sequence resource="EMBL-CDS" id="CAA85023"/>
    </conflict>
</comment>
<reference key="1">
    <citation type="journal article" date="1994" name="Yeast">
        <title>Sequence analysis of a 31 kb DNA fragment from the right arm of Saccharomyces cerevisiae chromosome II.</title>
        <authorList>
            <person name="van der Aart Q.J.M."/>
            <person name="Barthe C."/>
            <person name="Doignon F."/>
            <person name="Aigle M."/>
            <person name="Crouzet M."/>
            <person name="Steensma H.Y."/>
        </authorList>
    </citation>
    <scope>NUCLEOTIDE SEQUENCE [GENOMIC DNA]</scope>
    <source>
        <strain>ATCC 204508 / S288c</strain>
    </source>
</reference>
<reference key="2">
    <citation type="submission" date="1995-08" db="EMBL/GenBank/DDBJ databases">
        <authorList>
            <person name="van der Aart Q.J.M."/>
        </authorList>
    </citation>
    <scope>SEQUENCE REVISION</scope>
</reference>
<reference key="3">
    <citation type="journal article" date="1994" name="EMBO J.">
        <title>Complete DNA sequence of yeast chromosome II.</title>
        <authorList>
            <person name="Feldmann H."/>
            <person name="Aigle M."/>
            <person name="Aljinovic G."/>
            <person name="Andre B."/>
            <person name="Baclet M.C."/>
            <person name="Barthe C."/>
            <person name="Baur A."/>
            <person name="Becam A.-M."/>
            <person name="Biteau N."/>
            <person name="Boles E."/>
            <person name="Brandt T."/>
            <person name="Brendel M."/>
            <person name="Brueckner M."/>
            <person name="Bussereau F."/>
            <person name="Christiansen C."/>
            <person name="Contreras R."/>
            <person name="Crouzet M."/>
            <person name="Cziepluch C."/>
            <person name="Demolis N."/>
            <person name="Delaveau T."/>
            <person name="Doignon F."/>
            <person name="Domdey H."/>
            <person name="Duesterhus S."/>
            <person name="Dubois E."/>
            <person name="Dujon B."/>
            <person name="El Bakkoury M."/>
            <person name="Entian K.-D."/>
            <person name="Feuermann M."/>
            <person name="Fiers W."/>
            <person name="Fobo G.M."/>
            <person name="Fritz C."/>
            <person name="Gassenhuber J."/>
            <person name="Glansdorff N."/>
            <person name="Goffeau A."/>
            <person name="Grivell L.A."/>
            <person name="de Haan M."/>
            <person name="Hein C."/>
            <person name="Herbert C.J."/>
            <person name="Hollenberg C.P."/>
            <person name="Holmstroem K."/>
            <person name="Jacq C."/>
            <person name="Jacquet M."/>
            <person name="Jauniaux J.-C."/>
            <person name="Jonniaux J.-L."/>
            <person name="Kallesoee T."/>
            <person name="Kiesau P."/>
            <person name="Kirchrath L."/>
            <person name="Koetter P."/>
            <person name="Korol S."/>
            <person name="Liebl S."/>
            <person name="Logghe M."/>
            <person name="Lohan A.J.E."/>
            <person name="Louis E.J."/>
            <person name="Li Z.Y."/>
            <person name="Maat M.J."/>
            <person name="Mallet L."/>
            <person name="Mannhaupt G."/>
            <person name="Messenguy F."/>
            <person name="Miosga T."/>
            <person name="Molemans F."/>
            <person name="Mueller S."/>
            <person name="Nasr F."/>
            <person name="Obermaier B."/>
            <person name="Perea J."/>
            <person name="Pierard A."/>
            <person name="Piravandi E."/>
            <person name="Pohl F.M."/>
            <person name="Pohl T.M."/>
            <person name="Potier S."/>
            <person name="Proft M."/>
            <person name="Purnelle B."/>
            <person name="Ramezani Rad M."/>
            <person name="Rieger M."/>
            <person name="Rose M."/>
            <person name="Schaaff-Gerstenschlaeger I."/>
            <person name="Scherens B."/>
            <person name="Schwarzlose C."/>
            <person name="Skala J."/>
            <person name="Slonimski P.P."/>
            <person name="Smits P.H.M."/>
            <person name="Souciet J.-L."/>
            <person name="Steensma H.Y."/>
            <person name="Stucka R."/>
            <person name="Urrestarazu L.A."/>
            <person name="van der Aart Q.J.M."/>
            <person name="Van Dyck L."/>
            <person name="Vassarotti A."/>
            <person name="Vetter I."/>
            <person name="Vierendeels F."/>
            <person name="Vissers S."/>
            <person name="Wagner G."/>
            <person name="de Wergifosse P."/>
            <person name="Wolfe K.H."/>
            <person name="Zagulski M."/>
            <person name="Zimmermann F.K."/>
            <person name="Mewes H.-W."/>
            <person name="Kleine K."/>
        </authorList>
    </citation>
    <scope>NUCLEOTIDE SEQUENCE [LARGE SCALE GENOMIC DNA]</scope>
    <source>
        <strain>ATCC 204508 / S288c</strain>
    </source>
</reference>
<reference key="4">
    <citation type="journal article" date="2014" name="G3 (Bethesda)">
        <title>The reference genome sequence of Saccharomyces cerevisiae: Then and now.</title>
        <authorList>
            <person name="Engel S.R."/>
            <person name="Dietrich F.S."/>
            <person name="Fisk D.G."/>
            <person name="Binkley G."/>
            <person name="Balakrishnan R."/>
            <person name="Costanzo M.C."/>
            <person name="Dwight S.S."/>
            <person name="Hitz B.C."/>
            <person name="Karra K."/>
            <person name="Nash R.S."/>
            <person name="Weng S."/>
            <person name="Wong E.D."/>
            <person name="Lloyd P."/>
            <person name="Skrzypek M.S."/>
            <person name="Miyasato S.R."/>
            <person name="Simison M."/>
            <person name="Cherry J.M."/>
        </authorList>
    </citation>
    <scope>GENOME REANNOTATION</scope>
    <scope>SEQUENCE REVISION TO 428</scope>
    <source>
        <strain>ATCC 204508 / S288c</strain>
    </source>
</reference>
<reference key="5">
    <citation type="journal article" date="1997" name="Genetics">
        <title>Large scale identification of genes involved in cell surface biosynthesis and architecture in Saccharomyces cerevisiae.</title>
        <authorList>
            <person name="Lussier M."/>
            <person name="White A.-M."/>
            <person name="Sheraton J."/>
            <person name="di Paolo T."/>
            <person name="Treadwell J."/>
            <person name="Southard S.B."/>
            <person name="Horenstein C.I."/>
            <person name="Chen-Weiner J."/>
            <person name="Ram A.F.J."/>
            <person name="Kapteyn J.C."/>
            <person name="Roemer T.W."/>
            <person name="Vo D.H."/>
            <person name="Bondoc D.C."/>
            <person name="Hall J."/>
            <person name="Zhong W.-W."/>
            <person name="Sdicu A.-M."/>
            <person name="Davies J."/>
            <person name="Klis F.M."/>
            <person name="Robbins P.W."/>
            <person name="Bussey H."/>
        </authorList>
    </citation>
    <scope>IDENTIFICATION</scope>
</reference>
<reference key="6">
    <citation type="journal article" date="1999" name="J. Bacteriol.">
        <title>Amino acid residues in the omega-minus region participate in cellular localization of yeast glycosylphosphatidylinositol-attached proteins.</title>
        <authorList>
            <person name="Hamada K."/>
            <person name="Terashima H."/>
            <person name="Arisawa M."/>
            <person name="Yabuki N."/>
            <person name="Kitada K."/>
        </authorList>
    </citation>
    <scope>GPI-ANCHOR</scope>
    <scope>SUBCELLULAR LOCATION</scope>
</reference>
<reference key="7">
    <citation type="journal article" date="2000" name="Nucleic Acids Res.">
        <title>Test of intron predictions reveals novel splice sites, alternatively spliced mRNAs and new introns in meiotically regulated genes of yeast.</title>
        <authorList>
            <person name="Davis C.A."/>
            <person name="Grate L."/>
            <person name="Spingola M."/>
            <person name="Ares M. Jr."/>
        </authorList>
    </citation>
    <scope>IDENTIFICATION OF INTRON</scope>
</reference>
<reference key="8">
    <citation type="journal article" date="2002" name="Funct. Integr. Genomics">
        <title>Large-scale identification of genes important for apical growth in Saccharomyces cerevisiae by directed allele replacement technology (DART) screening.</title>
        <authorList>
            <person name="Bidlingmaier S."/>
            <person name="Snyder M.A."/>
        </authorList>
    </citation>
    <scope>FUNCTION</scope>
</reference>
<reference key="9">
    <citation type="journal article" date="2003" name="FEMS Microbiol. Lett.">
        <title>The localization change of Ybr078w/Ecm33, a yeast GPI-associated protein, from the plasma membrane to the cell wall, affecting the cellular function.</title>
        <authorList>
            <person name="Terashima H."/>
            <person name="Hamada K."/>
            <person name="Kitada K."/>
        </authorList>
    </citation>
    <scope>FUNCTION</scope>
    <scope>SUBCELLULAR LOCATION</scope>
</reference>
<reference key="10">
    <citation type="journal article" date="2004" name="Microbiology">
        <title>PST1 and ECM33 encode two yeast cell surface GPI proteins important for cell wall integrity.</title>
        <authorList>
            <person name="Pardo M."/>
            <person name="Monteoliva L."/>
            <person name="Vazquez P."/>
            <person name="Martinez R."/>
            <person name="Molero G."/>
            <person name="Nombela C."/>
            <person name="Gil C."/>
        </authorList>
    </citation>
    <scope>FUNCTION</scope>
</reference>
<reference key="11">
    <citation type="journal article" date="2005" name="J. Biol. Chem.">
        <title>Comprehensive proteomic analysis of Saccharomyces cerevisiae cell walls: identification of proteins covalently attached via glycosylphosphatidylinositol remnants or mild alkali-sensitive linkages.</title>
        <authorList>
            <person name="Yin Q.Y."/>
            <person name="de Groot P.W.J."/>
            <person name="Dekker H.L."/>
            <person name="de Jong L."/>
            <person name="Klis F.M."/>
            <person name="de Koster C.G."/>
        </authorList>
    </citation>
    <scope>SUBCELLULAR LOCATION</scope>
    <scope>IDENTIFICATION BY MASS SPECTROMETRY</scope>
</reference>
<reference key="12">
    <citation type="journal article" date="2007" name="FEMS Yeast Res.">
        <title>Mass spectrometric quantitation of covalently bound cell wall proteins in Saccharomyces cerevisiae.</title>
        <authorList>
            <person name="Yin Q.Y."/>
            <person name="de Groot P.W.J."/>
            <person name="de Jong L."/>
            <person name="Klis F.M."/>
            <person name="de Koster C.G."/>
        </authorList>
    </citation>
    <scope>LEVEL OF PROTEIN EXPRESSION</scope>
    <scope>IDENTIFICATION BY MASS SPECTROMETRY</scope>
</reference>
<reference key="13">
    <citation type="journal article" date="2007" name="Mol. Cell. Proteomics">
        <title>Profiling phosphoproteins of yeast mitochondria reveals a role of phosphorylation in assembly of the ATP synthase.</title>
        <authorList>
            <person name="Reinders J."/>
            <person name="Wagner K."/>
            <person name="Zahedi R.P."/>
            <person name="Stojanovski D."/>
            <person name="Eyrich B."/>
            <person name="van der Laan M."/>
            <person name="Rehling P."/>
            <person name="Sickmann A."/>
            <person name="Pfanner N."/>
            <person name="Meisinger C."/>
        </authorList>
    </citation>
    <scope>PHOSPHORYLATION [LARGE SCALE ANALYSIS] AT SER-339</scope>
    <scope>IDENTIFICATION BY MASS SPECTROMETRY [LARGE SCALE ANALYSIS]</scope>
    <source>
        <strain>ATCC 76625 / YPH499</strain>
    </source>
</reference>
<reference key="14">
    <citation type="journal article" date="2008" name="J. Virol.">
        <title>An engineered Saccharomyces cerevisiae strain binds the broadly neutralizing human immunodeficiency virus type 1 antibody 2G12 and elicits mannose-specific gp120-binding antibodies.</title>
        <authorList>
            <person name="Luallen R.J."/>
            <person name="Lin J."/>
            <person name="Fu H."/>
            <person name="Cai K.K."/>
            <person name="Agrawal C."/>
            <person name="Mboudjeka I."/>
            <person name="Lee F.-H."/>
            <person name="Montefiori D."/>
            <person name="Smith D.F."/>
            <person name="Doms R.W."/>
            <person name="Geng Y."/>
        </authorList>
    </citation>
    <scope>SUBCELLULAR LOCATION</scope>
    <scope>GLYCOSYLATION</scope>
    <scope>IDENTIFICATION BY MASS SPECTROMETRY</scope>
</reference>
<keyword id="KW-1003">Cell membrane</keyword>
<keyword id="KW-0134">Cell wall</keyword>
<keyword id="KW-0961">Cell wall biogenesis/degradation</keyword>
<keyword id="KW-0325">Glycoprotein</keyword>
<keyword id="KW-0336">GPI-anchor</keyword>
<keyword id="KW-0449">Lipoprotein</keyword>
<keyword id="KW-0472">Membrane</keyword>
<keyword id="KW-0597">Phosphoprotein</keyword>
<keyword id="KW-1185">Reference proteome</keyword>
<keyword id="KW-0964">Secreted</keyword>
<keyword id="KW-0732">Signal</keyword>
<proteinExistence type="evidence at protein level"/>
<gene>
    <name type="primary">ECM33</name>
    <name type="ordered locus">YBR078W</name>
    <name type="ORF">YBR0727</name>
</gene>
<sequence length="429" mass="43769">MQFKNALTATAILSASALAANSTTSIPSSCSIGTSATATAQADLDKISGCSTIVGNLTITGDLGSAALASIQEIDGSLTIFNSSSLSSFSADSIKKITGDLNMQELIILTSASFGSLQEVDSINMVTLPAISTFSTDLQNANNIIVSDTTLESVEGFSTLKKVNVFNINNNRYLNSFQSSLESVSDSLQFSSNGDNTTLAFDNLVWANNITLRDVNSISFGSLQTVNASLGFINNTLPSLNLTQLSKVGQSLSIVSNDELSKAAFSNLTTVGGGFIIANNTQLKVIDGFNKVQTVGGAIEVTGNFSTLDLSSLKSVRGGANFDSSSSNFSCNALKKLQSNGAIQGDSFVCKNGATSTSVKLSSTSTESSKSSATSSASSSGDASNAQANVSASASSSSSSSKKSKGAAPELVPATSFMGVVAAVGVALL</sequence>
<accession>P38248</accession>
<accession>D6VQ77</accession>
<accession>P89498</accession>
<name>ECM33_YEAST</name>
<feature type="signal peptide" evidence="1">
    <location>
        <begin position="1"/>
        <end position="19"/>
    </location>
</feature>
<feature type="chain" id="PRO_0000033191" description="Cell wall protein ECM33">
    <location>
        <begin position="20"/>
        <end position="406"/>
    </location>
</feature>
<feature type="propeptide" id="PRO_0000033192" description="Removed in mature form" evidence="1">
    <location>
        <begin position="407"/>
        <end position="429"/>
    </location>
</feature>
<feature type="region of interest" description="Disordered" evidence="2">
    <location>
        <begin position="361"/>
        <end position="410"/>
    </location>
</feature>
<feature type="compositionally biased region" description="Low complexity" evidence="2">
    <location>
        <begin position="361"/>
        <end position="401"/>
    </location>
</feature>
<feature type="modified residue" description="Phosphoserine" evidence="11">
    <location>
        <position position="339"/>
    </location>
</feature>
<feature type="lipid moiety-binding region" description="GPI-anchor amidated glycine" evidence="1">
    <location>
        <position position="406"/>
    </location>
</feature>
<feature type="glycosylation site" description="N-linked (GlcNAc...) asparagine" evidence="1">
    <location>
        <position position="21"/>
    </location>
</feature>
<feature type="glycosylation site" description="N-linked (GlcNAc...) asparagine" evidence="1">
    <location>
        <position position="56"/>
    </location>
</feature>
<feature type="glycosylation site" description="N-linked (GlcNAc...) asparagine" evidence="1">
    <location>
        <position position="82"/>
    </location>
</feature>
<feature type="glycosylation site" description="N-linked (GlcNAc...) asparagine" evidence="1">
    <location>
        <position position="196"/>
    </location>
</feature>
<feature type="glycosylation site" description="N-linked (GlcNAc...) asparagine" evidence="1">
    <location>
        <position position="209"/>
    </location>
</feature>
<feature type="glycosylation site" description="N-linked (GlcNAc...) asparagine" evidence="1">
    <location>
        <position position="227"/>
    </location>
</feature>
<feature type="glycosylation site" description="N-linked (GlcNAc...) asparagine" evidence="1">
    <location>
        <position position="234"/>
    </location>
</feature>
<feature type="glycosylation site" description="N-linked (GlcNAc...) asparagine" evidence="1">
    <location>
        <position position="241"/>
    </location>
</feature>
<feature type="glycosylation site" description="N-linked (GlcNAc...) asparagine" evidence="1">
    <location>
        <position position="267"/>
    </location>
</feature>
<feature type="glycosylation site" description="N-linked (GlcNAc...) asparagine" evidence="1">
    <location>
        <position position="279"/>
    </location>
</feature>
<feature type="glycosylation site" description="N-linked (GlcNAc...) asparagine" evidence="1">
    <location>
        <position position="304"/>
    </location>
</feature>
<feature type="glycosylation site" description="N-linked (GlcNAc...) asparagine" evidence="1">
    <location>
        <position position="328"/>
    </location>
</feature>
<feature type="glycosylation site" description="N-linked (GlcNAc...) asparagine" evidence="1">
    <location>
        <position position="389"/>
    </location>
</feature>
<organism>
    <name type="scientific">Saccharomyces cerevisiae (strain ATCC 204508 / S288c)</name>
    <name type="common">Baker's yeast</name>
    <dbReference type="NCBI Taxonomy" id="559292"/>
    <lineage>
        <taxon>Eukaryota</taxon>
        <taxon>Fungi</taxon>
        <taxon>Dikarya</taxon>
        <taxon>Ascomycota</taxon>
        <taxon>Saccharomycotina</taxon>
        <taxon>Saccharomycetes</taxon>
        <taxon>Saccharomycetales</taxon>
        <taxon>Saccharomycetaceae</taxon>
        <taxon>Saccharomyces</taxon>
    </lineage>
</organism>